<geneLocation type="mitochondrion"/>
<proteinExistence type="inferred from homology"/>
<evidence type="ECO:0000250" key="1"/>
<evidence type="ECO:0000250" key="2">
    <source>
        <dbReference type="UniProtKB" id="P00157"/>
    </source>
</evidence>
<evidence type="ECO:0000255" key="3">
    <source>
        <dbReference type="PROSITE-ProRule" id="PRU00967"/>
    </source>
</evidence>
<evidence type="ECO:0000255" key="4">
    <source>
        <dbReference type="PROSITE-ProRule" id="PRU00968"/>
    </source>
</evidence>
<gene>
    <name type="primary">MT-CYB</name>
    <name type="synonym">COB</name>
    <name type="synonym">CYTB</name>
    <name type="synonym">MTCYB</name>
</gene>
<protein>
    <recommendedName>
        <fullName>Cytochrome b</fullName>
    </recommendedName>
    <alternativeName>
        <fullName>Complex III subunit 3</fullName>
    </alternativeName>
    <alternativeName>
        <fullName>Complex III subunit III</fullName>
    </alternativeName>
    <alternativeName>
        <fullName>Cytochrome b-c1 complex subunit 3</fullName>
    </alternativeName>
    <alternativeName>
        <fullName>Ubiquinol-cytochrome-c reductase complex cytochrome b subunit</fullName>
    </alternativeName>
</protein>
<accession>Q9TF73</accession>
<organism>
    <name type="scientific">Spermophilus relictus</name>
    <name type="common">Relict ground squirrel</name>
    <name type="synonym">Citellus relictus</name>
    <dbReference type="NCBI Taxonomy" id="99856"/>
    <lineage>
        <taxon>Eukaryota</taxon>
        <taxon>Metazoa</taxon>
        <taxon>Chordata</taxon>
        <taxon>Craniata</taxon>
        <taxon>Vertebrata</taxon>
        <taxon>Euteleostomi</taxon>
        <taxon>Mammalia</taxon>
        <taxon>Eutheria</taxon>
        <taxon>Euarchontoglires</taxon>
        <taxon>Glires</taxon>
        <taxon>Rodentia</taxon>
        <taxon>Sciuromorpha</taxon>
        <taxon>Sciuridae</taxon>
        <taxon>Xerinae</taxon>
        <taxon>Marmotini</taxon>
        <taxon>Spermophilus</taxon>
    </lineage>
</organism>
<keyword id="KW-0249">Electron transport</keyword>
<keyword id="KW-0349">Heme</keyword>
<keyword id="KW-0408">Iron</keyword>
<keyword id="KW-0472">Membrane</keyword>
<keyword id="KW-0479">Metal-binding</keyword>
<keyword id="KW-0496">Mitochondrion</keyword>
<keyword id="KW-0999">Mitochondrion inner membrane</keyword>
<keyword id="KW-0679">Respiratory chain</keyword>
<keyword id="KW-0812">Transmembrane</keyword>
<keyword id="KW-1133">Transmembrane helix</keyword>
<keyword id="KW-0813">Transport</keyword>
<keyword id="KW-0830">Ubiquinone</keyword>
<name>CYB_SPERE</name>
<sequence>MTNTRKTHPLXKIINHSFIDLPAPSNISAWWNFGSLLGLCLIIQILTGLFLAMHYTSDTMTAFSSVTHICRDVNYGWLIRYMHANGASMFXICLFLHVGRGMYYGSYTYFETWNIGVILLFAVMATAFMGYVLPWGQMSFWGATVITNLLSAIPYIGTTLVEWIWGGFSVDKATLTRFFAFHFILPFIIAALVMVHLLFLHETGSNNPSGLISDSDKIPFHPYYTIKDILGVLLLVLTLMALVLFSPDLLGDPDNYTPANPLTTPPHIKPEWYFLFAYAILRSIPNKLGGVLALVFSILILMLFPLLHLSKQRSMMFRPLSQCVFWIWVADLFTLTWIGGQPVEHPFIIIGQLASILYLTIILLILPTVSMIENKLLKW</sequence>
<reference key="1">
    <citation type="submission" date="1999-06" db="EMBL/GenBank/DDBJ databases">
        <title>A molecular phylogeny of ground squirrels and prairie dogs.</title>
        <authorList>
            <person name="Harrison R.G."/>
            <person name="Sherman P.W."/>
            <person name="Yensen E."/>
            <person name="Hoffmann R.S."/>
            <person name="Bogdanowicz S.M."/>
        </authorList>
    </citation>
    <scope>NUCLEOTIDE SEQUENCE [GENOMIC DNA]</scope>
    <source>
        <strain>Isolate S138</strain>
    </source>
</reference>
<comment type="function">
    <text evidence="2">Component of the ubiquinol-cytochrome c reductase complex (complex III or cytochrome b-c1 complex) that is part of the mitochondrial respiratory chain. The b-c1 complex mediates electron transfer from ubiquinol to cytochrome c. Contributes to the generation of a proton gradient across the mitochondrial membrane that is then used for ATP synthesis.</text>
</comment>
<comment type="cofactor">
    <cofactor evidence="2">
        <name>heme b</name>
        <dbReference type="ChEBI" id="CHEBI:60344"/>
    </cofactor>
    <text evidence="2">Binds 2 heme b groups non-covalently.</text>
</comment>
<comment type="subunit">
    <text evidence="2">The cytochrome bc1 complex contains 11 subunits: 3 respiratory subunits (MT-CYB, CYC1 and UQCRFS1), 2 core proteins (UQCRC1 and UQCRC2) and 6 low-molecular weight proteins (UQCRH/QCR6, UQCRB/QCR7, UQCRQ/QCR8, UQCR10/QCR9, UQCR11/QCR10 and a cleavage product of UQCRFS1). This cytochrome bc1 complex then forms a dimer.</text>
</comment>
<comment type="subcellular location">
    <subcellularLocation>
        <location evidence="2">Mitochondrion inner membrane</location>
        <topology evidence="2">Multi-pass membrane protein</topology>
    </subcellularLocation>
</comment>
<comment type="miscellaneous">
    <text evidence="1">Heme 1 (or BL or b562) is low-potential and absorbs at about 562 nm, and heme 2 (or BH or b566) is high-potential and absorbs at about 566 nm.</text>
</comment>
<comment type="similarity">
    <text evidence="3 4">Belongs to the cytochrome b family.</text>
</comment>
<comment type="caution">
    <text evidence="2">The full-length protein contains only eight transmembrane helices, not nine as predicted by bioinformatics tools.</text>
</comment>
<dbReference type="EMBL" id="AF157876">
    <property type="protein sequence ID" value="AAD50160.1"/>
    <property type="molecule type" value="Genomic_DNA"/>
</dbReference>
<dbReference type="GO" id="GO:0005743">
    <property type="term" value="C:mitochondrial inner membrane"/>
    <property type="evidence" value="ECO:0007669"/>
    <property type="project" value="UniProtKB-SubCell"/>
</dbReference>
<dbReference type="GO" id="GO:0045275">
    <property type="term" value="C:respiratory chain complex III"/>
    <property type="evidence" value="ECO:0007669"/>
    <property type="project" value="InterPro"/>
</dbReference>
<dbReference type="GO" id="GO:0046872">
    <property type="term" value="F:metal ion binding"/>
    <property type="evidence" value="ECO:0007669"/>
    <property type="project" value="UniProtKB-KW"/>
</dbReference>
<dbReference type="GO" id="GO:0008121">
    <property type="term" value="F:ubiquinol-cytochrome-c reductase activity"/>
    <property type="evidence" value="ECO:0007669"/>
    <property type="project" value="InterPro"/>
</dbReference>
<dbReference type="GO" id="GO:0006122">
    <property type="term" value="P:mitochondrial electron transport, ubiquinol to cytochrome c"/>
    <property type="evidence" value="ECO:0007669"/>
    <property type="project" value="TreeGrafter"/>
</dbReference>
<dbReference type="CDD" id="cd00290">
    <property type="entry name" value="cytochrome_b_C"/>
    <property type="match status" value="1"/>
</dbReference>
<dbReference type="CDD" id="cd00284">
    <property type="entry name" value="Cytochrome_b_N"/>
    <property type="match status" value="1"/>
</dbReference>
<dbReference type="FunFam" id="1.20.810.10:FF:000002">
    <property type="entry name" value="Cytochrome b"/>
    <property type="match status" value="1"/>
</dbReference>
<dbReference type="Gene3D" id="1.20.810.10">
    <property type="entry name" value="Cytochrome Bc1 Complex, Chain C"/>
    <property type="match status" value="1"/>
</dbReference>
<dbReference type="InterPro" id="IPR005798">
    <property type="entry name" value="Cyt_b/b6_C"/>
</dbReference>
<dbReference type="InterPro" id="IPR036150">
    <property type="entry name" value="Cyt_b/b6_C_sf"/>
</dbReference>
<dbReference type="InterPro" id="IPR005797">
    <property type="entry name" value="Cyt_b/b6_N"/>
</dbReference>
<dbReference type="InterPro" id="IPR027387">
    <property type="entry name" value="Cytb/b6-like_sf"/>
</dbReference>
<dbReference type="InterPro" id="IPR030689">
    <property type="entry name" value="Cytochrome_b"/>
</dbReference>
<dbReference type="InterPro" id="IPR048260">
    <property type="entry name" value="Cytochrome_b_C_euk/bac"/>
</dbReference>
<dbReference type="InterPro" id="IPR048259">
    <property type="entry name" value="Cytochrome_b_N_euk/bac"/>
</dbReference>
<dbReference type="InterPro" id="IPR016174">
    <property type="entry name" value="Di-haem_cyt_TM"/>
</dbReference>
<dbReference type="PANTHER" id="PTHR19271">
    <property type="entry name" value="CYTOCHROME B"/>
    <property type="match status" value="1"/>
</dbReference>
<dbReference type="PANTHER" id="PTHR19271:SF16">
    <property type="entry name" value="CYTOCHROME B"/>
    <property type="match status" value="1"/>
</dbReference>
<dbReference type="Pfam" id="PF00032">
    <property type="entry name" value="Cytochrom_B_C"/>
    <property type="match status" value="1"/>
</dbReference>
<dbReference type="Pfam" id="PF00033">
    <property type="entry name" value="Cytochrome_B"/>
    <property type="match status" value="1"/>
</dbReference>
<dbReference type="PIRSF" id="PIRSF038885">
    <property type="entry name" value="COB"/>
    <property type="match status" value="1"/>
</dbReference>
<dbReference type="SUPFAM" id="SSF81648">
    <property type="entry name" value="a domain/subunit of cytochrome bc1 complex (Ubiquinol-cytochrome c reductase)"/>
    <property type="match status" value="1"/>
</dbReference>
<dbReference type="SUPFAM" id="SSF81342">
    <property type="entry name" value="Transmembrane di-heme cytochromes"/>
    <property type="match status" value="1"/>
</dbReference>
<dbReference type="PROSITE" id="PS51003">
    <property type="entry name" value="CYTB_CTER"/>
    <property type="match status" value="1"/>
</dbReference>
<dbReference type="PROSITE" id="PS51002">
    <property type="entry name" value="CYTB_NTER"/>
    <property type="match status" value="1"/>
</dbReference>
<feature type="chain" id="PRO_0000061601" description="Cytochrome b">
    <location>
        <begin position="1"/>
        <end position="379"/>
    </location>
</feature>
<feature type="transmembrane region" description="Helical" evidence="2">
    <location>
        <begin position="33"/>
        <end position="53"/>
    </location>
</feature>
<feature type="transmembrane region" description="Helical" evidence="2">
    <location>
        <begin position="77"/>
        <end position="98"/>
    </location>
</feature>
<feature type="transmembrane region" description="Helical" evidence="2">
    <location>
        <begin position="113"/>
        <end position="133"/>
    </location>
</feature>
<feature type="transmembrane region" description="Helical" evidence="2">
    <location>
        <begin position="178"/>
        <end position="198"/>
    </location>
</feature>
<feature type="transmembrane region" description="Helical" evidence="2">
    <location>
        <begin position="226"/>
        <end position="246"/>
    </location>
</feature>
<feature type="transmembrane region" description="Helical" evidence="2">
    <location>
        <begin position="288"/>
        <end position="308"/>
    </location>
</feature>
<feature type="transmembrane region" description="Helical" evidence="2">
    <location>
        <begin position="320"/>
        <end position="340"/>
    </location>
</feature>
<feature type="transmembrane region" description="Helical" evidence="2">
    <location>
        <begin position="347"/>
        <end position="367"/>
    </location>
</feature>
<feature type="binding site" description="axial binding residue" evidence="2">
    <location>
        <position position="83"/>
    </location>
    <ligand>
        <name>heme b</name>
        <dbReference type="ChEBI" id="CHEBI:60344"/>
        <label>b562</label>
    </ligand>
    <ligandPart>
        <name>Fe</name>
        <dbReference type="ChEBI" id="CHEBI:18248"/>
    </ligandPart>
</feature>
<feature type="binding site" description="axial binding residue" evidence="2">
    <location>
        <position position="97"/>
    </location>
    <ligand>
        <name>heme b</name>
        <dbReference type="ChEBI" id="CHEBI:60344"/>
        <label>b566</label>
    </ligand>
    <ligandPart>
        <name>Fe</name>
        <dbReference type="ChEBI" id="CHEBI:18248"/>
    </ligandPart>
</feature>
<feature type="binding site" description="axial binding residue" evidence="2">
    <location>
        <position position="182"/>
    </location>
    <ligand>
        <name>heme b</name>
        <dbReference type="ChEBI" id="CHEBI:60344"/>
        <label>b562</label>
    </ligand>
    <ligandPart>
        <name>Fe</name>
        <dbReference type="ChEBI" id="CHEBI:18248"/>
    </ligandPart>
</feature>
<feature type="binding site" description="axial binding residue" evidence="2">
    <location>
        <position position="196"/>
    </location>
    <ligand>
        <name>heme b</name>
        <dbReference type="ChEBI" id="CHEBI:60344"/>
        <label>b566</label>
    </ligand>
    <ligandPart>
        <name>Fe</name>
        <dbReference type="ChEBI" id="CHEBI:18248"/>
    </ligandPart>
</feature>
<feature type="binding site" evidence="2">
    <location>
        <position position="201"/>
    </location>
    <ligand>
        <name>a ubiquinone</name>
        <dbReference type="ChEBI" id="CHEBI:16389"/>
    </ligand>
</feature>